<sequence>MSSLSCPTYRSRTSSSSPFLSNHHHSSLINVVDPRRSLSFHYASPQGLNLAELCVVRSQRRSVQSSVVVQDGSVATESSSSEEAKDVGVLTIPSLEADKVVAESDGGEQLSTVSITVVGASGDLAKKKIFPALFALYYEGCLPEHFTIFGYARSKMTDAELRVMVSKTLTCRIDKRANCGEKMEEFLKRCFYHSGQYDSQEHFVALDEKLKEHEGGRLSNRLFYLSIPPNIFVDAVKCASSSASSVNGWTRVIVEKPFGRDSKTSAALTKSLKQYLEEDQIFRIDHYLGKELVENLSVLRFSNLIFEPLWSRQYIRNVQFIFSEDFGTEGRGGYFDNYGIIRDIMQNHLLQILALFAMETPVSLDAEDIRNEKVKVLRSMRPIKLEDVVIGQYKSHSIGGVTYPSYTDDKTVPKGSLTPTFAAAALFIDNARWDGVPFLMKAGKALNTRSAEIRVQFRHVPGNLYNRNSGTDRDQTTNELVIRVQPDEAIYLKINNKVPGLGMRLDQSNLNLLYSARYSKEIPDAYERLLLDAIEGERRLFIRSDELDAAWALFTPLLKEIEEKKTTPEFYPYGSRGPVGAHYLAAKHKVQWGDLSLDQ</sequence>
<accession>Q8L743</accession>
<accession>O48695</accession>
<accession>Q53YG8</accession>
<organism>
    <name type="scientific">Arabidopsis thaliana</name>
    <name type="common">Mouse-ear cress</name>
    <dbReference type="NCBI Taxonomy" id="3702"/>
    <lineage>
        <taxon>Eukaryota</taxon>
        <taxon>Viridiplantae</taxon>
        <taxon>Streptophyta</taxon>
        <taxon>Embryophyta</taxon>
        <taxon>Tracheophyta</taxon>
        <taxon>Spermatophyta</taxon>
        <taxon>Magnoliopsida</taxon>
        <taxon>eudicotyledons</taxon>
        <taxon>Gunneridae</taxon>
        <taxon>Pentapetalae</taxon>
        <taxon>rosids</taxon>
        <taxon>malvids</taxon>
        <taxon>Brassicales</taxon>
        <taxon>Brassicaceae</taxon>
        <taxon>Camelineae</taxon>
        <taxon>Arabidopsis</taxon>
    </lineage>
</organism>
<dbReference type="EC" id="1.1.1.49" evidence="5"/>
<dbReference type="EMBL" id="AC002396">
    <property type="protein sequence ID" value="AAC00588.1"/>
    <property type="molecule type" value="Genomic_DNA"/>
</dbReference>
<dbReference type="EMBL" id="CP002684">
    <property type="protein sequence ID" value="AEE30511.1"/>
    <property type="molecule type" value="Genomic_DNA"/>
</dbReference>
<dbReference type="EMBL" id="AY139768">
    <property type="protein sequence ID" value="AAM98087.1"/>
    <property type="molecule type" value="mRNA"/>
</dbReference>
<dbReference type="EMBL" id="BT003032">
    <property type="protein sequence ID" value="AAO23597.1"/>
    <property type="molecule type" value="mRNA"/>
</dbReference>
<dbReference type="PIR" id="T00659">
    <property type="entry name" value="T00659"/>
</dbReference>
<dbReference type="RefSeq" id="NP_173838.1">
    <property type="nucleotide sequence ID" value="NM_102274.3"/>
</dbReference>
<dbReference type="SMR" id="Q8L743"/>
<dbReference type="BioGRID" id="24282">
    <property type="interactions" value="3"/>
</dbReference>
<dbReference type="FunCoup" id="Q8L743">
    <property type="interactions" value="425"/>
</dbReference>
<dbReference type="IntAct" id="Q8L743">
    <property type="interactions" value="3"/>
</dbReference>
<dbReference type="STRING" id="3702.Q8L743"/>
<dbReference type="iPTMnet" id="Q8L743"/>
<dbReference type="PaxDb" id="3702-AT1G24280.1"/>
<dbReference type="ProteomicsDB" id="230021"/>
<dbReference type="EnsemblPlants" id="AT1G24280.1">
    <property type="protein sequence ID" value="AT1G24280.1"/>
    <property type="gene ID" value="AT1G24280"/>
</dbReference>
<dbReference type="GeneID" id="839044"/>
<dbReference type="Gramene" id="AT1G24280.1">
    <property type="protein sequence ID" value="AT1G24280.1"/>
    <property type="gene ID" value="AT1G24280"/>
</dbReference>
<dbReference type="KEGG" id="ath:AT1G24280"/>
<dbReference type="Araport" id="AT1G24280"/>
<dbReference type="TAIR" id="AT1G24280">
    <property type="gene designation" value="G6PD3"/>
</dbReference>
<dbReference type="eggNOG" id="KOG0563">
    <property type="taxonomic scope" value="Eukaryota"/>
</dbReference>
<dbReference type="HOGENOM" id="CLU_013524_2_3_1"/>
<dbReference type="InParanoid" id="Q8L743"/>
<dbReference type="OMA" id="IPEFYPY"/>
<dbReference type="OrthoDB" id="60984at2759"/>
<dbReference type="PhylomeDB" id="Q8L743"/>
<dbReference type="BRENDA" id="1.1.1.49">
    <property type="organism ID" value="399"/>
</dbReference>
<dbReference type="UniPathway" id="UPA00115">
    <property type="reaction ID" value="UER00408"/>
</dbReference>
<dbReference type="PRO" id="PR:Q8L743"/>
<dbReference type="Proteomes" id="UP000006548">
    <property type="component" value="Chromosome 1"/>
</dbReference>
<dbReference type="ExpressionAtlas" id="Q8L743">
    <property type="expression patterns" value="baseline and differential"/>
</dbReference>
<dbReference type="GO" id="GO:0009507">
    <property type="term" value="C:chloroplast"/>
    <property type="evidence" value="ECO:0000250"/>
    <property type="project" value="TAIR"/>
</dbReference>
<dbReference type="GO" id="GO:0009570">
    <property type="term" value="C:chloroplast stroma"/>
    <property type="evidence" value="ECO:0007669"/>
    <property type="project" value="UniProtKB-SubCell"/>
</dbReference>
<dbReference type="GO" id="GO:0004345">
    <property type="term" value="F:glucose-6-phosphate dehydrogenase activity"/>
    <property type="evidence" value="ECO:0000314"/>
    <property type="project" value="TAIR"/>
</dbReference>
<dbReference type="GO" id="GO:0050661">
    <property type="term" value="F:NADP binding"/>
    <property type="evidence" value="ECO:0007669"/>
    <property type="project" value="InterPro"/>
</dbReference>
<dbReference type="GO" id="GO:0006006">
    <property type="term" value="P:glucose metabolic process"/>
    <property type="evidence" value="ECO:0000314"/>
    <property type="project" value="TAIR"/>
</dbReference>
<dbReference type="GO" id="GO:0009051">
    <property type="term" value="P:pentose-phosphate shunt, oxidative branch"/>
    <property type="evidence" value="ECO:0000314"/>
    <property type="project" value="TAIR"/>
</dbReference>
<dbReference type="FunFam" id="3.30.360.10:FF:000018">
    <property type="entry name" value="Glucose-6-phosphate 1-dehydrogenase"/>
    <property type="match status" value="1"/>
</dbReference>
<dbReference type="FunFam" id="3.40.50.720:FF:000222">
    <property type="entry name" value="Glucose-6-phosphate 1-dehydrogenase"/>
    <property type="match status" value="1"/>
</dbReference>
<dbReference type="Gene3D" id="3.30.360.10">
    <property type="entry name" value="Dihydrodipicolinate Reductase, domain 2"/>
    <property type="match status" value="1"/>
</dbReference>
<dbReference type="Gene3D" id="3.40.50.720">
    <property type="entry name" value="NAD(P)-binding Rossmann-like Domain"/>
    <property type="match status" value="1"/>
</dbReference>
<dbReference type="HAMAP" id="MF_00966">
    <property type="entry name" value="G6PD"/>
    <property type="match status" value="1"/>
</dbReference>
<dbReference type="InterPro" id="IPR001282">
    <property type="entry name" value="G6P_DH"/>
</dbReference>
<dbReference type="InterPro" id="IPR019796">
    <property type="entry name" value="G6P_DH_AS"/>
</dbReference>
<dbReference type="InterPro" id="IPR022675">
    <property type="entry name" value="G6P_DH_C"/>
</dbReference>
<dbReference type="InterPro" id="IPR022674">
    <property type="entry name" value="G6P_DH_NAD-bd"/>
</dbReference>
<dbReference type="InterPro" id="IPR036291">
    <property type="entry name" value="NAD(P)-bd_dom_sf"/>
</dbReference>
<dbReference type="NCBIfam" id="TIGR00871">
    <property type="entry name" value="zwf"/>
    <property type="match status" value="1"/>
</dbReference>
<dbReference type="PANTHER" id="PTHR23429:SF20">
    <property type="entry name" value="GLUCOSE-6-PHOSPHATE 1-DEHYDROGENASE 3, CHLOROPLASTIC"/>
    <property type="match status" value="1"/>
</dbReference>
<dbReference type="PANTHER" id="PTHR23429">
    <property type="entry name" value="GLUCOSE-6-PHOSPHATE 1-DEHYDROGENASE G6PD"/>
    <property type="match status" value="1"/>
</dbReference>
<dbReference type="Pfam" id="PF02781">
    <property type="entry name" value="G6PD_C"/>
    <property type="match status" value="1"/>
</dbReference>
<dbReference type="Pfam" id="PF00479">
    <property type="entry name" value="G6PD_N"/>
    <property type="match status" value="1"/>
</dbReference>
<dbReference type="PRINTS" id="PR00079">
    <property type="entry name" value="G6PDHDRGNASE"/>
</dbReference>
<dbReference type="SUPFAM" id="SSF55347">
    <property type="entry name" value="Glyceraldehyde-3-phosphate dehydrogenase-like, C-terminal domain"/>
    <property type="match status" value="1"/>
</dbReference>
<dbReference type="SUPFAM" id="SSF51735">
    <property type="entry name" value="NAD(P)-binding Rossmann-fold domains"/>
    <property type="match status" value="1"/>
</dbReference>
<dbReference type="PROSITE" id="PS00069">
    <property type="entry name" value="G6P_DEHYDROGENASE"/>
    <property type="match status" value="1"/>
</dbReference>
<reference key="1">
    <citation type="journal article" date="2000" name="Nature">
        <title>Sequence and analysis of chromosome 1 of the plant Arabidopsis thaliana.</title>
        <authorList>
            <person name="Theologis A."/>
            <person name="Ecker J.R."/>
            <person name="Palm C.J."/>
            <person name="Federspiel N.A."/>
            <person name="Kaul S."/>
            <person name="White O."/>
            <person name="Alonso J."/>
            <person name="Altafi H."/>
            <person name="Araujo R."/>
            <person name="Bowman C.L."/>
            <person name="Brooks S.Y."/>
            <person name="Buehler E."/>
            <person name="Chan A."/>
            <person name="Chao Q."/>
            <person name="Chen H."/>
            <person name="Cheuk R.F."/>
            <person name="Chin C.W."/>
            <person name="Chung M.K."/>
            <person name="Conn L."/>
            <person name="Conway A.B."/>
            <person name="Conway A.R."/>
            <person name="Creasy T.H."/>
            <person name="Dewar K."/>
            <person name="Dunn P."/>
            <person name="Etgu P."/>
            <person name="Feldblyum T.V."/>
            <person name="Feng J.-D."/>
            <person name="Fong B."/>
            <person name="Fujii C.Y."/>
            <person name="Gill J.E."/>
            <person name="Goldsmith A.D."/>
            <person name="Haas B."/>
            <person name="Hansen N.F."/>
            <person name="Hughes B."/>
            <person name="Huizar L."/>
            <person name="Hunter J.L."/>
            <person name="Jenkins J."/>
            <person name="Johnson-Hopson C."/>
            <person name="Khan S."/>
            <person name="Khaykin E."/>
            <person name="Kim C.J."/>
            <person name="Koo H.L."/>
            <person name="Kremenetskaia I."/>
            <person name="Kurtz D.B."/>
            <person name="Kwan A."/>
            <person name="Lam B."/>
            <person name="Langin-Hooper S."/>
            <person name="Lee A."/>
            <person name="Lee J.M."/>
            <person name="Lenz C.A."/>
            <person name="Li J.H."/>
            <person name="Li Y.-P."/>
            <person name="Lin X."/>
            <person name="Liu S.X."/>
            <person name="Liu Z.A."/>
            <person name="Luros J.S."/>
            <person name="Maiti R."/>
            <person name="Marziali A."/>
            <person name="Militscher J."/>
            <person name="Miranda M."/>
            <person name="Nguyen M."/>
            <person name="Nierman W.C."/>
            <person name="Osborne B.I."/>
            <person name="Pai G."/>
            <person name="Peterson J."/>
            <person name="Pham P.K."/>
            <person name="Rizzo M."/>
            <person name="Rooney T."/>
            <person name="Rowley D."/>
            <person name="Sakano H."/>
            <person name="Salzberg S.L."/>
            <person name="Schwartz J.R."/>
            <person name="Shinn P."/>
            <person name="Southwick A.M."/>
            <person name="Sun H."/>
            <person name="Tallon L.J."/>
            <person name="Tambunga G."/>
            <person name="Toriumi M.J."/>
            <person name="Town C.D."/>
            <person name="Utterback T."/>
            <person name="Van Aken S."/>
            <person name="Vaysberg M."/>
            <person name="Vysotskaia V.S."/>
            <person name="Walker M."/>
            <person name="Wu D."/>
            <person name="Yu G."/>
            <person name="Fraser C.M."/>
            <person name="Venter J.C."/>
            <person name="Davis R.W."/>
        </authorList>
    </citation>
    <scope>NUCLEOTIDE SEQUENCE [LARGE SCALE GENOMIC DNA]</scope>
    <source>
        <strain>cv. Columbia</strain>
    </source>
</reference>
<reference key="2">
    <citation type="journal article" date="2017" name="Plant J.">
        <title>Araport11: a complete reannotation of the Arabidopsis thaliana reference genome.</title>
        <authorList>
            <person name="Cheng C.Y."/>
            <person name="Krishnakumar V."/>
            <person name="Chan A.P."/>
            <person name="Thibaud-Nissen F."/>
            <person name="Schobel S."/>
            <person name="Town C.D."/>
        </authorList>
    </citation>
    <scope>GENOME REANNOTATION</scope>
    <source>
        <strain>cv. Columbia</strain>
    </source>
</reference>
<reference key="3">
    <citation type="journal article" date="2003" name="Science">
        <title>Empirical analysis of transcriptional activity in the Arabidopsis genome.</title>
        <authorList>
            <person name="Yamada K."/>
            <person name="Lim J."/>
            <person name="Dale J.M."/>
            <person name="Chen H."/>
            <person name="Shinn P."/>
            <person name="Palm C.J."/>
            <person name="Southwick A.M."/>
            <person name="Wu H.C."/>
            <person name="Kim C.J."/>
            <person name="Nguyen M."/>
            <person name="Pham P.K."/>
            <person name="Cheuk R.F."/>
            <person name="Karlin-Newmann G."/>
            <person name="Liu S.X."/>
            <person name="Lam B."/>
            <person name="Sakano H."/>
            <person name="Wu T."/>
            <person name="Yu G."/>
            <person name="Miranda M."/>
            <person name="Quach H.L."/>
            <person name="Tripp M."/>
            <person name="Chang C.H."/>
            <person name="Lee J.M."/>
            <person name="Toriumi M.J."/>
            <person name="Chan M.M."/>
            <person name="Tang C.C."/>
            <person name="Onodera C.S."/>
            <person name="Deng J.M."/>
            <person name="Akiyama K."/>
            <person name="Ansari Y."/>
            <person name="Arakawa T."/>
            <person name="Banh J."/>
            <person name="Banno F."/>
            <person name="Bowser L."/>
            <person name="Brooks S.Y."/>
            <person name="Carninci P."/>
            <person name="Chao Q."/>
            <person name="Choy N."/>
            <person name="Enju A."/>
            <person name="Goldsmith A.D."/>
            <person name="Gurjal M."/>
            <person name="Hansen N.F."/>
            <person name="Hayashizaki Y."/>
            <person name="Johnson-Hopson C."/>
            <person name="Hsuan V.W."/>
            <person name="Iida K."/>
            <person name="Karnes M."/>
            <person name="Khan S."/>
            <person name="Koesema E."/>
            <person name="Ishida J."/>
            <person name="Jiang P.X."/>
            <person name="Jones T."/>
            <person name="Kawai J."/>
            <person name="Kamiya A."/>
            <person name="Meyers C."/>
            <person name="Nakajima M."/>
            <person name="Narusaka M."/>
            <person name="Seki M."/>
            <person name="Sakurai T."/>
            <person name="Satou M."/>
            <person name="Tamse R."/>
            <person name="Vaysberg M."/>
            <person name="Wallender E.K."/>
            <person name="Wong C."/>
            <person name="Yamamura Y."/>
            <person name="Yuan S."/>
            <person name="Shinozaki K."/>
            <person name="Davis R.W."/>
            <person name="Theologis A."/>
            <person name="Ecker J.R."/>
        </authorList>
    </citation>
    <scope>NUCLEOTIDE SEQUENCE [LARGE SCALE MRNA]</scope>
    <source>
        <strain>cv. Columbia</strain>
    </source>
</reference>
<reference key="4">
    <citation type="journal article" date="2005" name="Plant J.">
        <title>Genome-wide analysis of glucose-6-phosphate dehydrogenases in Arabidopsis.</title>
        <authorList>
            <person name="Wakao S."/>
            <person name="Benning C."/>
        </authorList>
    </citation>
    <scope>FUNCTION</scope>
    <scope>CATALYTIC ACTIVITY</scope>
    <scope>BIOPHYSICOCHEMICAL PROPERTIES</scope>
    <scope>TISSUE SPECIFICITY</scope>
</reference>
<reference key="5">
    <citation type="journal article" date="2011" name="Plant J.">
        <title>Alternative targeting of Arabidopsis plastidic glucose-6-phosphate dehydrogenase G6PD1 involves cysteine-dependent interaction with G6PD4 in the cytosol.</title>
        <authorList>
            <person name="Meyer T."/>
            <person name="Hoelscher C."/>
            <person name="Schwoeppe C."/>
            <person name="von Schaewen A."/>
        </authorList>
    </citation>
    <scope>INTERACTION WITH G6PD1</scope>
    <scope>SUBCELLULAR LOCATION</scope>
</reference>
<reference key="6">
    <citation type="journal article" date="2012" name="Mol. Cell. Proteomics">
        <title>Comparative large-scale characterisation of plant vs. mammal proteins reveals similar and idiosyncratic N-alpha acetylation features.</title>
        <authorList>
            <person name="Bienvenut W.V."/>
            <person name="Sumpton D."/>
            <person name="Martinez A."/>
            <person name="Lilla S."/>
            <person name="Espagne C."/>
            <person name="Meinnel T."/>
            <person name="Giglione C."/>
        </authorList>
    </citation>
    <scope>ACETYLATION [LARGE SCALE ANALYSIS] AT VAL-67</scope>
    <scope>CLEAVAGE OF TRANSIT PEPTIDE [LARGE SCALE ANALYSIS] AFTER SER-66</scope>
    <scope>IDENTIFICATION BY MASS SPECTROMETRY [LARGE SCALE ANALYSIS]</scope>
</reference>
<gene>
    <name evidence="7" type="primary">G6PD3</name>
    <name evidence="9" type="ordered locus">At1g24280</name>
    <name evidence="10" type="ORF">F3I6.22</name>
</gene>
<keyword id="KW-0007">Acetylation</keyword>
<keyword id="KW-0119">Carbohydrate metabolism</keyword>
<keyword id="KW-0150">Chloroplast</keyword>
<keyword id="KW-1015">Disulfide bond</keyword>
<keyword id="KW-0313">Glucose metabolism</keyword>
<keyword id="KW-0521">NADP</keyword>
<keyword id="KW-0560">Oxidoreductase</keyword>
<keyword id="KW-0934">Plastid</keyword>
<keyword id="KW-1185">Reference proteome</keyword>
<keyword id="KW-0809">Transit peptide</keyword>
<protein>
    <recommendedName>
        <fullName evidence="8">Glucose-6-phosphate 1-dehydrogenase 3, chloroplastic</fullName>
        <shortName evidence="7">AtG6PD3</shortName>
        <shortName evidence="8">G6PDH3</shortName>
        <ecNumber evidence="5">1.1.1.49</ecNumber>
    </recommendedName>
</protein>
<feature type="transit peptide" description="Chloroplast" evidence="11">
    <location>
        <begin position="1"/>
        <end position="66"/>
    </location>
</feature>
<feature type="chain" id="PRO_0000010437" description="Glucose-6-phosphate 1-dehydrogenase 3, chloroplastic">
    <location>
        <begin position="67"/>
        <end position="599"/>
    </location>
</feature>
<feature type="region of interest" description="Disordered" evidence="4">
    <location>
        <begin position="1"/>
        <end position="23"/>
    </location>
</feature>
<feature type="compositionally biased region" description="Low complexity" evidence="4">
    <location>
        <begin position="1"/>
        <end position="18"/>
    </location>
</feature>
<feature type="active site" description="Proton acceptor" evidence="1">
    <location>
        <position position="348"/>
    </location>
</feature>
<feature type="binding site" evidence="2">
    <location>
        <begin position="119"/>
        <end position="126"/>
    </location>
    <ligand>
        <name>NADP(+)</name>
        <dbReference type="ChEBI" id="CHEBI:58349"/>
        <label>1</label>
    </ligand>
</feature>
<feature type="binding site" evidence="2">
    <location>
        <position position="153"/>
    </location>
    <ligand>
        <name>NADP(+)</name>
        <dbReference type="ChEBI" id="CHEBI:58349"/>
        <label>1</label>
    </ligand>
</feature>
<feature type="binding site" evidence="2">
    <location>
        <position position="256"/>
    </location>
    <ligand>
        <name>D-glucose 6-phosphate</name>
        <dbReference type="ChEBI" id="CHEBI:61548"/>
    </ligand>
</feature>
<feature type="binding site" evidence="2">
    <location>
        <position position="256"/>
    </location>
    <ligand>
        <name>NADP(+)</name>
        <dbReference type="ChEBI" id="CHEBI:58349"/>
        <label>1</label>
    </ligand>
</feature>
<feature type="binding site" evidence="2">
    <location>
        <begin position="286"/>
        <end position="290"/>
    </location>
    <ligand>
        <name>D-glucose 6-phosphate</name>
        <dbReference type="ChEBI" id="CHEBI:61548"/>
    </ligand>
</feature>
<feature type="binding site" evidence="2">
    <location>
        <position position="324"/>
    </location>
    <ligand>
        <name>D-glucose 6-phosphate</name>
        <dbReference type="ChEBI" id="CHEBI:61548"/>
    </ligand>
</feature>
<feature type="binding site" evidence="2">
    <location>
        <position position="343"/>
    </location>
    <ligand>
        <name>D-glucose 6-phosphate</name>
        <dbReference type="ChEBI" id="CHEBI:61548"/>
    </ligand>
</feature>
<feature type="binding site" evidence="2">
    <location>
        <position position="441"/>
    </location>
    <ligand>
        <name>NADP(+)</name>
        <dbReference type="ChEBI" id="CHEBI:58349"/>
        <label>2</label>
    </ligand>
</feature>
<feature type="binding site" evidence="2">
    <location>
        <position position="444"/>
    </location>
    <ligand>
        <name>D-glucose 6-phosphate</name>
        <dbReference type="ChEBI" id="CHEBI:61548"/>
    </ligand>
</feature>
<feature type="binding site" evidence="2">
    <location>
        <position position="449"/>
    </location>
    <ligand>
        <name>D-glucose 6-phosphate</name>
        <dbReference type="ChEBI" id="CHEBI:61548"/>
    </ligand>
</feature>
<feature type="binding site" evidence="2">
    <location>
        <position position="454"/>
    </location>
    <ligand>
        <name>NADP(+)</name>
        <dbReference type="ChEBI" id="CHEBI:58349"/>
        <label>2</label>
    </ligand>
</feature>
<feature type="binding site" evidence="2">
    <location>
        <position position="483"/>
    </location>
    <ligand>
        <name>NADP(+)</name>
        <dbReference type="ChEBI" id="CHEBI:58349"/>
        <label>2</label>
    </ligand>
</feature>
<feature type="binding site" evidence="2">
    <location>
        <position position="485"/>
    </location>
    <ligand>
        <name>D-glucose 6-phosphate</name>
        <dbReference type="ChEBI" id="CHEBI:61548"/>
    </ligand>
</feature>
<feature type="binding site" evidence="2">
    <location>
        <begin position="491"/>
        <end position="493"/>
    </location>
    <ligand>
        <name>NADP(+)</name>
        <dbReference type="ChEBI" id="CHEBI:58349"/>
        <label>2</label>
    </ligand>
</feature>
<feature type="binding site" evidence="2">
    <location>
        <position position="576"/>
    </location>
    <ligand>
        <name>NADP(+)</name>
        <dbReference type="ChEBI" id="CHEBI:58349"/>
        <label>2</label>
    </ligand>
</feature>
<feature type="modified residue" description="N-acetylvaline" evidence="11">
    <location>
        <position position="67"/>
    </location>
</feature>
<feature type="disulfide bond" description="Redox modulation" evidence="3">
    <location>
        <begin position="171"/>
        <end position="179"/>
    </location>
</feature>
<feature type="sequence conflict" description="In Ref. 3; AAM98087/AAO23597." evidence="8" ref="3">
    <original>S</original>
    <variation>N</variation>
    <location>
        <position position="79"/>
    </location>
</feature>
<proteinExistence type="evidence at protein level"/>
<name>G6PD3_ARATH</name>
<comment type="function">
    <text evidence="5">Catalyzes the rate-limiting step of the oxidative pentose-phosphate pathway, which represents a route for the dissimilation of carbohydrates besides glycolysis (PubMed:15634201). The main function of this enzyme is to provide reducing power (NADPH) and pentose phosphates for fatty acid and nucleic acid synthesis which are involved in membrane synthesis and cell division (PubMed:15634201).</text>
</comment>
<comment type="catalytic activity">
    <reaction evidence="5">
        <text>D-glucose 6-phosphate + NADP(+) = 6-phospho-D-glucono-1,5-lactone + NADPH + H(+)</text>
        <dbReference type="Rhea" id="RHEA:15841"/>
        <dbReference type="ChEBI" id="CHEBI:15378"/>
        <dbReference type="ChEBI" id="CHEBI:57783"/>
        <dbReference type="ChEBI" id="CHEBI:57955"/>
        <dbReference type="ChEBI" id="CHEBI:58349"/>
        <dbReference type="ChEBI" id="CHEBI:61548"/>
        <dbReference type="EC" id="1.1.1.49"/>
    </reaction>
</comment>
<comment type="activity regulation">
    <text evidence="3">Regulated by metabolites. Post-translationally inactivated by cysteine-mediated redox modification via the ferredoxin-thioredoxin system in the light and this avoids futile cycles with photosynthetic CO2 fixation.</text>
</comment>
<comment type="biophysicochemical properties">
    <kinetics>
        <KM evidence="5">17 uM for NADP</KM>
    </kinetics>
    <phDependence>
        <text evidence="5">Optimum pH is 8.0-8.5.</text>
    </phDependence>
</comment>
<comment type="pathway">
    <text evidence="8">Carbohydrate degradation; pentose phosphate pathway; D-ribulose 5-phosphate from D-glucose 6-phosphate (oxidative stage): step 1/3.</text>
</comment>
<comment type="subunit">
    <text evidence="1 6">Forms homodimer (By similarity). Interacts with G6PD1 (PubMed:21309870).</text>
</comment>
<comment type="interaction">
    <interactant intactId="EBI-2355237">
        <id>Q8L743</id>
    </interactant>
    <interactant intactId="EBI-2363192">
        <id>Q8S8E3</id>
        <label>PYL6</label>
    </interactant>
    <organismsDiffer>false</organismsDiffer>
    <experiments>3</experiments>
</comment>
<comment type="subcellular location">
    <subcellularLocation>
        <location evidence="6">Plastid</location>
        <location evidence="6">Chloroplast stroma</location>
    </subcellularLocation>
</comment>
<comment type="tissue specificity">
    <text evidence="5">Expressed in roots, flowers and siliques.</text>
</comment>
<comment type="miscellaneous">
    <text evidence="7">There are 6 glucose-6-phosphate 1-dehydrogenase genes in A.thaliana.</text>
</comment>
<comment type="similarity">
    <text evidence="8">Belongs to the glucose-6-phosphate dehydrogenase family.</text>
</comment>
<evidence type="ECO:0000250" key="1">
    <source>
        <dbReference type="UniProtKB" id="P11411"/>
    </source>
</evidence>
<evidence type="ECO:0000250" key="2">
    <source>
        <dbReference type="UniProtKB" id="P11413"/>
    </source>
</evidence>
<evidence type="ECO:0000250" key="3">
    <source>
        <dbReference type="UniProtKB" id="Q43839"/>
    </source>
</evidence>
<evidence type="ECO:0000256" key="4">
    <source>
        <dbReference type="SAM" id="MobiDB-lite"/>
    </source>
</evidence>
<evidence type="ECO:0000269" key="5">
    <source>
    </source>
</evidence>
<evidence type="ECO:0000269" key="6">
    <source>
    </source>
</evidence>
<evidence type="ECO:0000303" key="7">
    <source>
    </source>
</evidence>
<evidence type="ECO:0000305" key="8"/>
<evidence type="ECO:0000312" key="9">
    <source>
        <dbReference type="Araport" id="AT1G24280"/>
    </source>
</evidence>
<evidence type="ECO:0000312" key="10">
    <source>
        <dbReference type="EMBL" id="AAC00588.1"/>
    </source>
</evidence>
<evidence type="ECO:0007744" key="11">
    <source>
    </source>
</evidence>